<protein>
    <recommendedName>
        <fullName evidence="1">Large ribosomal subunit protein bL35</fullName>
    </recommendedName>
    <alternativeName>
        <fullName evidence="2">50S ribosomal protein L35</fullName>
    </alternativeName>
</protein>
<evidence type="ECO:0000255" key="1">
    <source>
        <dbReference type="HAMAP-Rule" id="MF_00514"/>
    </source>
</evidence>
<evidence type="ECO:0000305" key="2"/>
<sequence length="64" mass="7447">MPKMKTHSGAKKRFRVTGSGKIMRQQANRRHYLEHKSSRLTRRLKGDQLVSKGSIKQIKRMLGI</sequence>
<accession>C5CAP9</accession>
<gene>
    <name evidence="1" type="primary">rpmI</name>
    <name type="ordered locus">Mlut_14580</name>
</gene>
<keyword id="KW-1185">Reference proteome</keyword>
<keyword id="KW-0687">Ribonucleoprotein</keyword>
<keyword id="KW-0689">Ribosomal protein</keyword>
<proteinExistence type="inferred from homology"/>
<organism>
    <name type="scientific">Micrococcus luteus (strain ATCC 4698 / DSM 20030 / JCM 1464 / CCM 169 / CCUG 5858 / IAM 1056 / NBRC 3333 / NCIMB 9278 / NCTC 2665 / VKM Ac-2230)</name>
    <name type="common">Micrococcus lysodeikticus</name>
    <dbReference type="NCBI Taxonomy" id="465515"/>
    <lineage>
        <taxon>Bacteria</taxon>
        <taxon>Bacillati</taxon>
        <taxon>Actinomycetota</taxon>
        <taxon>Actinomycetes</taxon>
        <taxon>Micrococcales</taxon>
        <taxon>Micrococcaceae</taxon>
        <taxon>Micrococcus</taxon>
    </lineage>
</organism>
<name>RL35_MICLC</name>
<comment type="similarity">
    <text evidence="1">Belongs to the bacterial ribosomal protein bL35 family.</text>
</comment>
<dbReference type="EMBL" id="CP001628">
    <property type="protein sequence ID" value="ACS30953.1"/>
    <property type="molecule type" value="Genomic_DNA"/>
</dbReference>
<dbReference type="RefSeq" id="WP_002853699.1">
    <property type="nucleotide sequence ID" value="NZ_WBMF01000168.1"/>
</dbReference>
<dbReference type="SMR" id="C5CAP9"/>
<dbReference type="STRING" id="465515.Mlut_14580"/>
<dbReference type="EnsemblBacteria" id="ACS30953">
    <property type="protein sequence ID" value="ACS30953"/>
    <property type="gene ID" value="Mlut_14580"/>
</dbReference>
<dbReference type="GeneID" id="93364510"/>
<dbReference type="KEGG" id="mlu:Mlut_14580"/>
<dbReference type="eggNOG" id="COG0291">
    <property type="taxonomic scope" value="Bacteria"/>
</dbReference>
<dbReference type="HOGENOM" id="CLU_169643_4_2_11"/>
<dbReference type="Proteomes" id="UP000000738">
    <property type="component" value="Chromosome"/>
</dbReference>
<dbReference type="GO" id="GO:0022625">
    <property type="term" value="C:cytosolic large ribosomal subunit"/>
    <property type="evidence" value="ECO:0007669"/>
    <property type="project" value="TreeGrafter"/>
</dbReference>
<dbReference type="GO" id="GO:0003735">
    <property type="term" value="F:structural constituent of ribosome"/>
    <property type="evidence" value="ECO:0007669"/>
    <property type="project" value="InterPro"/>
</dbReference>
<dbReference type="GO" id="GO:0006412">
    <property type="term" value="P:translation"/>
    <property type="evidence" value="ECO:0007669"/>
    <property type="project" value="UniProtKB-UniRule"/>
</dbReference>
<dbReference type="FunFam" id="4.10.410.60:FF:000001">
    <property type="entry name" value="50S ribosomal protein L35"/>
    <property type="match status" value="1"/>
</dbReference>
<dbReference type="Gene3D" id="4.10.410.60">
    <property type="match status" value="1"/>
</dbReference>
<dbReference type="HAMAP" id="MF_00514">
    <property type="entry name" value="Ribosomal_bL35"/>
    <property type="match status" value="1"/>
</dbReference>
<dbReference type="InterPro" id="IPR001706">
    <property type="entry name" value="Ribosomal_bL35"/>
</dbReference>
<dbReference type="InterPro" id="IPR021137">
    <property type="entry name" value="Ribosomal_bL35-like"/>
</dbReference>
<dbReference type="InterPro" id="IPR018265">
    <property type="entry name" value="Ribosomal_bL35_CS"/>
</dbReference>
<dbReference type="InterPro" id="IPR037229">
    <property type="entry name" value="Ribosomal_bL35_sf"/>
</dbReference>
<dbReference type="NCBIfam" id="TIGR00001">
    <property type="entry name" value="rpmI_bact"/>
    <property type="match status" value="1"/>
</dbReference>
<dbReference type="PANTHER" id="PTHR33343">
    <property type="entry name" value="54S RIBOSOMAL PROTEIN BL35M"/>
    <property type="match status" value="1"/>
</dbReference>
<dbReference type="PANTHER" id="PTHR33343:SF1">
    <property type="entry name" value="LARGE RIBOSOMAL SUBUNIT PROTEIN BL35M"/>
    <property type="match status" value="1"/>
</dbReference>
<dbReference type="Pfam" id="PF01632">
    <property type="entry name" value="Ribosomal_L35p"/>
    <property type="match status" value="1"/>
</dbReference>
<dbReference type="PRINTS" id="PR00064">
    <property type="entry name" value="RIBOSOMALL35"/>
</dbReference>
<dbReference type="SUPFAM" id="SSF143034">
    <property type="entry name" value="L35p-like"/>
    <property type="match status" value="1"/>
</dbReference>
<dbReference type="PROSITE" id="PS00936">
    <property type="entry name" value="RIBOSOMAL_L35"/>
    <property type="match status" value="1"/>
</dbReference>
<feature type="chain" id="PRO_1000211709" description="Large ribosomal subunit protein bL35">
    <location>
        <begin position="1"/>
        <end position="64"/>
    </location>
</feature>
<reference key="1">
    <citation type="journal article" date="2010" name="J. Bacteriol.">
        <title>Genome sequence of the Fleming strain of Micrococcus luteus, a simple free-living actinobacterium.</title>
        <authorList>
            <person name="Young M."/>
            <person name="Artsatbanov V."/>
            <person name="Beller H.R."/>
            <person name="Chandra G."/>
            <person name="Chater K.F."/>
            <person name="Dover L.G."/>
            <person name="Goh E.B."/>
            <person name="Kahan T."/>
            <person name="Kaprelyants A.S."/>
            <person name="Kyrpides N."/>
            <person name="Lapidus A."/>
            <person name="Lowry S.R."/>
            <person name="Lykidis A."/>
            <person name="Mahillon J."/>
            <person name="Markowitz V."/>
            <person name="Mavromatis K."/>
            <person name="Mukamolova G.V."/>
            <person name="Oren A."/>
            <person name="Rokem J.S."/>
            <person name="Smith M.C."/>
            <person name="Young D.I."/>
            <person name="Greenblatt C.L."/>
        </authorList>
    </citation>
    <scope>NUCLEOTIDE SEQUENCE [LARGE SCALE GENOMIC DNA]</scope>
    <source>
        <strain>ATCC 4698 / DSM 20030 / JCM 1464 / CCM 169 / CCUG 5858 / IAM 1056 / NBRC 3333 / NCIMB 9278 / NCTC 2665 / VKM Ac-2230</strain>
    </source>
</reference>